<proteinExistence type="inferred from homology"/>
<gene>
    <name evidence="1" type="primary">murC</name>
    <name type="ordered locus">LSL_0485</name>
</gene>
<dbReference type="EC" id="6.3.2.8" evidence="1"/>
<dbReference type="EMBL" id="CP000233">
    <property type="protein sequence ID" value="ABD99294.1"/>
    <property type="molecule type" value="Genomic_DNA"/>
</dbReference>
<dbReference type="RefSeq" id="WP_003699774.1">
    <property type="nucleotide sequence ID" value="NC_007929.1"/>
</dbReference>
<dbReference type="RefSeq" id="YP_535377.1">
    <property type="nucleotide sequence ID" value="NC_007929.1"/>
</dbReference>
<dbReference type="SMR" id="Q1WUP1"/>
<dbReference type="STRING" id="362948.LSL_0485"/>
<dbReference type="KEGG" id="lsl:LSL_0485"/>
<dbReference type="PATRIC" id="fig|362948.14.peg.561"/>
<dbReference type="HOGENOM" id="CLU_028104_1_0_9"/>
<dbReference type="OrthoDB" id="9804126at2"/>
<dbReference type="UniPathway" id="UPA00219"/>
<dbReference type="Proteomes" id="UP000006559">
    <property type="component" value="Chromosome"/>
</dbReference>
<dbReference type="GO" id="GO:0005737">
    <property type="term" value="C:cytoplasm"/>
    <property type="evidence" value="ECO:0007669"/>
    <property type="project" value="UniProtKB-SubCell"/>
</dbReference>
<dbReference type="GO" id="GO:0005524">
    <property type="term" value="F:ATP binding"/>
    <property type="evidence" value="ECO:0007669"/>
    <property type="project" value="UniProtKB-UniRule"/>
</dbReference>
<dbReference type="GO" id="GO:0008763">
    <property type="term" value="F:UDP-N-acetylmuramate-L-alanine ligase activity"/>
    <property type="evidence" value="ECO:0007669"/>
    <property type="project" value="UniProtKB-UniRule"/>
</dbReference>
<dbReference type="GO" id="GO:0051301">
    <property type="term" value="P:cell division"/>
    <property type="evidence" value="ECO:0007669"/>
    <property type="project" value="UniProtKB-KW"/>
</dbReference>
<dbReference type="GO" id="GO:0071555">
    <property type="term" value="P:cell wall organization"/>
    <property type="evidence" value="ECO:0007669"/>
    <property type="project" value="UniProtKB-KW"/>
</dbReference>
<dbReference type="GO" id="GO:0009252">
    <property type="term" value="P:peptidoglycan biosynthetic process"/>
    <property type="evidence" value="ECO:0007669"/>
    <property type="project" value="UniProtKB-UniRule"/>
</dbReference>
<dbReference type="GO" id="GO:0008360">
    <property type="term" value="P:regulation of cell shape"/>
    <property type="evidence" value="ECO:0007669"/>
    <property type="project" value="UniProtKB-KW"/>
</dbReference>
<dbReference type="Gene3D" id="3.90.190.20">
    <property type="entry name" value="Mur ligase, C-terminal domain"/>
    <property type="match status" value="1"/>
</dbReference>
<dbReference type="Gene3D" id="3.40.1190.10">
    <property type="entry name" value="Mur-like, catalytic domain"/>
    <property type="match status" value="1"/>
</dbReference>
<dbReference type="Gene3D" id="3.40.50.720">
    <property type="entry name" value="NAD(P)-binding Rossmann-like Domain"/>
    <property type="match status" value="1"/>
</dbReference>
<dbReference type="HAMAP" id="MF_00046">
    <property type="entry name" value="MurC"/>
    <property type="match status" value="1"/>
</dbReference>
<dbReference type="InterPro" id="IPR036565">
    <property type="entry name" value="Mur-like_cat_sf"/>
</dbReference>
<dbReference type="InterPro" id="IPR004101">
    <property type="entry name" value="Mur_ligase_C"/>
</dbReference>
<dbReference type="InterPro" id="IPR036615">
    <property type="entry name" value="Mur_ligase_C_dom_sf"/>
</dbReference>
<dbReference type="InterPro" id="IPR013221">
    <property type="entry name" value="Mur_ligase_cen"/>
</dbReference>
<dbReference type="InterPro" id="IPR000713">
    <property type="entry name" value="Mur_ligase_N"/>
</dbReference>
<dbReference type="InterPro" id="IPR050061">
    <property type="entry name" value="MurCDEF_pg_biosynth"/>
</dbReference>
<dbReference type="InterPro" id="IPR005758">
    <property type="entry name" value="UDP-N-AcMur_Ala_ligase_MurC"/>
</dbReference>
<dbReference type="NCBIfam" id="TIGR01082">
    <property type="entry name" value="murC"/>
    <property type="match status" value="1"/>
</dbReference>
<dbReference type="PANTHER" id="PTHR43445:SF3">
    <property type="entry name" value="UDP-N-ACETYLMURAMATE--L-ALANINE LIGASE"/>
    <property type="match status" value="1"/>
</dbReference>
<dbReference type="PANTHER" id="PTHR43445">
    <property type="entry name" value="UDP-N-ACETYLMURAMATE--L-ALANINE LIGASE-RELATED"/>
    <property type="match status" value="1"/>
</dbReference>
<dbReference type="Pfam" id="PF01225">
    <property type="entry name" value="Mur_ligase"/>
    <property type="match status" value="1"/>
</dbReference>
<dbReference type="Pfam" id="PF02875">
    <property type="entry name" value="Mur_ligase_C"/>
    <property type="match status" value="1"/>
</dbReference>
<dbReference type="Pfam" id="PF08245">
    <property type="entry name" value="Mur_ligase_M"/>
    <property type="match status" value="1"/>
</dbReference>
<dbReference type="SUPFAM" id="SSF51984">
    <property type="entry name" value="MurCD N-terminal domain"/>
    <property type="match status" value="1"/>
</dbReference>
<dbReference type="SUPFAM" id="SSF53623">
    <property type="entry name" value="MurD-like peptide ligases, catalytic domain"/>
    <property type="match status" value="1"/>
</dbReference>
<dbReference type="SUPFAM" id="SSF53244">
    <property type="entry name" value="MurD-like peptide ligases, peptide-binding domain"/>
    <property type="match status" value="1"/>
</dbReference>
<feature type="chain" id="PRO_1000004361" description="UDP-N-acetylmuramate--L-alanine ligase">
    <location>
        <begin position="1"/>
        <end position="443"/>
    </location>
</feature>
<feature type="binding site" evidence="1">
    <location>
        <begin position="111"/>
        <end position="117"/>
    </location>
    <ligand>
        <name>ATP</name>
        <dbReference type="ChEBI" id="CHEBI:30616"/>
    </ligand>
</feature>
<sequence>MNSEQTYFFVGIKGTGMSSLALILHDKGYKVLGSDIDKYTFTQRGLENAGIKILPFDEDNIKEDMIVVAGNAFGDDQVEIKKAHEMGLTVQTYPETVEQIIEETTSIGVAGAHGKTSTSGLLAHVLSGVSPTSYLVGDGSGKGTPNARFFVFEADEYRRHFVAYHPDYAIMTNIDFDHPDYFTDIDDVRDAFETLAMQTKKGIFVWGEDENLRKLNAKVPVHYYGTKSDDDFRAENIKRTTKGSNFDVYFHDEFIGNYDIPMFGEHNVLNSLAVIAVSYMEKVDQQEIAKELLTFKGVKRRFTEKRVADMVIIDDYAHHPAEIKATIDAARQQYPDKKIIAVFQPHTFSRTIALMDEFAESLSLADKVYLTDIFSSIREHDGKVSSEDLGKKISKGGEVLKLDNMSPLLDFHDDVVIFMGAGDIQKYEHAYEDLLSNLSLKNN</sequence>
<keyword id="KW-0067">ATP-binding</keyword>
<keyword id="KW-0131">Cell cycle</keyword>
<keyword id="KW-0132">Cell division</keyword>
<keyword id="KW-0133">Cell shape</keyword>
<keyword id="KW-0961">Cell wall biogenesis/degradation</keyword>
<keyword id="KW-0963">Cytoplasm</keyword>
<keyword id="KW-0436">Ligase</keyword>
<keyword id="KW-0547">Nucleotide-binding</keyword>
<keyword id="KW-0573">Peptidoglycan synthesis</keyword>
<keyword id="KW-1185">Reference proteome</keyword>
<name>MURC_LIGS1</name>
<accession>Q1WUP1</accession>
<protein>
    <recommendedName>
        <fullName evidence="1">UDP-N-acetylmuramate--L-alanine ligase</fullName>
        <ecNumber evidence="1">6.3.2.8</ecNumber>
    </recommendedName>
    <alternativeName>
        <fullName evidence="1">UDP-N-acetylmuramoyl-L-alanine synthetase</fullName>
    </alternativeName>
</protein>
<organism>
    <name type="scientific">Ligilactobacillus salivarius (strain UCC118)</name>
    <name type="common">Lactobacillus salivarius</name>
    <dbReference type="NCBI Taxonomy" id="362948"/>
    <lineage>
        <taxon>Bacteria</taxon>
        <taxon>Bacillati</taxon>
        <taxon>Bacillota</taxon>
        <taxon>Bacilli</taxon>
        <taxon>Lactobacillales</taxon>
        <taxon>Lactobacillaceae</taxon>
        <taxon>Ligilactobacillus</taxon>
    </lineage>
</organism>
<evidence type="ECO:0000255" key="1">
    <source>
        <dbReference type="HAMAP-Rule" id="MF_00046"/>
    </source>
</evidence>
<comment type="function">
    <text evidence="1">Cell wall formation.</text>
</comment>
<comment type="catalytic activity">
    <reaction evidence="1">
        <text>UDP-N-acetyl-alpha-D-muramate + L-alanine + ATP = UDP-N-acetyl-alpha-D-muramoyl-L-alanine + ADP + phosphate + H(+)</text>
        <dbReference type="Rhea" id="RHEA:23372"/>
        <dbReference type="ChEBI" id="CHEBI:15378"/>
        <dbReference type="ChEBI" id="CHEBI:30616"/>
        <dbReference type="ChEBI" id="CHEBI:43474"/>
        <dbReference type="ChEBI" id="CHEBI:57972"/>
        <dbReference type="ChEBI" id="CHEBI:70757"/>
        <dbReference type="ChEBI" id="CHEBI:83898"/>
        <dbReference type="ChEBI" id="CHEBI:456216"/>
        <dbReference type="EC" id="6.3.2.8"/>
    </reaction>
</comment>
<comment type="pathway">
    <text evidence="1">Cell wall biogenesis; peptidoglycan biosynthesis.</text>
</comment>
<comment type="subcellular location">
    <subcellularLocation>
        <location evidence="1">Cytoplasm</location>
    </subcellularLocation>
</comment>
<comment type="similarity">
    <text evidence="1">Belongs to the MurCDEF family.</text>
</comment>
<reference key="1">
    <citation type="journal article" date="2006" name="Proc. Natl. Acad. Sci. U.S.A.">
        <title>Multireplicon genome architecture of Lactobacillus salivarius.</title>
        <authorList>
            <person name="Claesson M.J."/>
            <person name="Li Y."/>
            <person name="Leahy S."/>
            <person name="Canchaya C."/>
            <person name="van Pijkeren J.P."/>
            <person name="Cerdeno-Tarraga A.M."/>
            <person name="Parkhill J."/>
            <person name="Flynn S."/>
            <person name="O'Sullivan G.C."/>
            <person name="Collins J.K."/>
            <person name="Higgins D."/>
            <person name="Shanahan F."/>
            <person name="Fitzgerald G.F."/>
            <person name="van Sinderen D."/>
            <person name="O'Toole P.W."/>
        </authorList>
    </citation>
    <scope>NUCLEOTIDE SEQUENCE [LARGE SCALE GENOMIC DNA]</scope>
    <source>
        <strain>UCC118</strain>
    </source>
</reference>